<accession>B7J2I0</accession>
<gene>
    <name evidence="1" type="primary">ackA</name>
    <name type="ordered locus">BbuZS7_0641</name>
</gene>
<organism>
    <name type="scientific">Borreliella burgdorferi (strain ZS7)</name>
    <name type="common">Borrelia burgdorferi</name>
    <dbReference type="NCBI Taxonomy" id="445985"/>
    <lineage>
        <taxon>Bacteria</taxon>
        <taxon>Pseudomonadati</taxon>
        <taxon>Spirochaetota</taxon>
        <taxon>Spirochaetia</taxon>
        <taxon>Spirochaetales</taxon>
        <taxon>Borreliaceae</taxon>
        <taxon>Borreliella</taxon>
    </lineage>
</organism>
<reference key="1">
    <citation type="journal article" date="2011" name="J. Bacteriol.">
        <title>Whole-genome sequences of thirteen isolates of Borrelia burgdorferi.</title>
        <authorList>
            <person name="Schutzer S.E."/>
            <person name="Fraser-Liggett C.M."/>
            <person name="Casjens S.R."/>
            <person name="Qiu W.G."/>
            <person name="Dunn J.J."/>
            <person name="Mongodin E.F."/>
            <person name="Luft B.J."/>
        </authorList>
    </citation>
    <scope>NUCLEOTIDE SEQUENCE [LARGE SCALE GENOMIC DNA]</scope>
    <source>
        <strain>ZS7</strain>
    </source>
</reference>
<evidence type="ECO:0000255" key="1">
    <source>
        <dbReference type="HAMAP-Rule" id="MF_00020"/>
    </source>
</evidence>
<protein>
    <recommendedName>
        <fullName evidence="1">Acetate kinase</fullName>
        <ecNumber evidence="1">2.7.2.1</ecNumber>
    </recommendedName>
    <alternativeName>
        <fullName evidence="1">Acetokinase</fullName>
    </alternativeName>
</protein>
<name>ACKA_BORBZ</name>
<proteinExistence type="inferred from homology"/>
<feature type="chain" id="PRO_1000116386" description="Acetate kinase">
    <location>
        <begin position="1"/>
        <end position="405"/>
    </location>
</feature>
<feature type="active site" description="Proton donor/acceptor" evidence="1">
    <location>
        <position position="149"/>
    </location>
</feature>
<feature type="binding site" evidence="1">
    <location>
        <position position="7"/>
    </location>
    <ligand>
        <name>Mg(2+)</name>
        <dbReference type="ChEBI" id="CHEBI:18420"/>
    </ligand>
</feature>
<feature type="binding site" evidence="1">
    <location>
        <position position="14"/>
    </location>
    <ligand>
        <name>ATP</name>
        <dbReference type="ChEBI" id="CHEBI:30616"/>
    </ligand>
</feature>
<feature type="binding site" evidence="1">
    <location>
        <position position="92"/>
    </location>
    <ligand>
        <name>substrate</name>
    </ligand>
</feature>
<feature type="binding site" evidence="1">
    <location>
        <begin position="209"/>
        <end position="213"/>
    </location>
    <ligand>
        <name>ATP</name>
        <dbReference type="ChEBI" id="CHEBI:30616"/>
    </ligand>
</feature>
<feature type="binding site" evidence="1">
    <location>
        <begin position="284"/>
        <end position="286"/>
    </location>
    <ligand>
        <name>ATP</name>
        <dbReference type="ChEBI" id="CHEBI:30616"/>
    </ligand>
</feature>
<feature type="binding site" evidence="1">
    <location>
        <position position="389"/>
    </location>
    <ligand>
        <name>Mg(2+)</name>
        <dbReference type="ChEBI" id="CHEBI:18420"/>
    </ligand>
</feature>
<feature type="site" description="Transition state stabilizer" evidence="1">
    <location>
        <position position="181"/>
    </location>
</feature>
<feature type="site" description="Transition state stabilizer" evidence="1">
    <location>
        <position position="242"/>
    </location>
</feature>
<sequence length="405" mass="45336">MKILIINTGSSSLKFAIYQYENSKKIISGIVEKIKSQKSIIKIVNTDGSTTERFEKGIENHQKAIEKMFKILTNSDLKILKTLSEIKIIGHRVVHGGSSLKNSVILNNSILNKLKQISELAPLHNPNAITAIEAVLKILPHAKQVLCFDTSWHQTIKEHAFLYAIPYSWYKNHNIRKYGFHGLSYSYITKRSSEILNKKIDSLNLIILHLGNGASINAVKNGKSYDTSMGITPLEGLAMGTRSGDIDPSIINLMSTILNKTTKQIEEILNKESGILGISEKSNDMRDIWNKIEEGEYQSKLAVEIMTYRIKKYIGSYIAALDFNVDAIVFTGGIGVTDYGIRALALKGFEKIGIELDLEKNEMAQSKYLESEISTINSKLKILAIPTNEESTILEDIYNLIPKNL</sequence>
<comment type="function">
    <text evidence="1">Catalyzes the formation of acetyl phosphate from acetate and ATP. Can also catalyze the reverse reaction.</text>
</comment>
<comment type="catalytic activity">
    <reaction evidence="1">
        <text>acetate + ATP = acetyl phosphate + ADP</text>
        <dbReference type="Rhea" id="RHEA:11352"/>
        <dbReference type="ChEBI" id="CHEBI:22191"/>
        <dbReference type="ChEBI" id="CHEBI:30089"/>
        <dbReference type="ChEBI" id="CHEBI:30616"/>
        <dbReference type="ChEBI" id="CHEBI:456216"/>
        <dbReference type="EC" id="2.7.2.1"/>
    </reaction>
</comment>
<comment type="cofactor">
    <cofactor evidence="1">
        <name>Mg(2+)</name>
        <dbReference type="ChEBI" id="CHEBI:18420"/>
    </cofactor>
    <cofactor evidence="1">
        <name>Mn(2+)</name>
        <dbReference type="ChEBI" id="CHEBI:29035"/>
    </cofactor>
    <text evidence="1">Mg(2+). Can also accept Mn(2+).</text>
</comment>
<comment type="pathway">
    <text evidence="1">Metabolic intermediate biosynthesis; acetyl-CoA biosynthesis; acetyl-CoA from acetate: step 1/2.</text>
</comment>
<comment type="subunit">
    <text evidence="1">Homodimer.</text>
</comment>
<comment type="subcellular location">
    <subcellularLocation>
        <location evidence="1">Cytoplasm</location>
    </subcellularLocation>
</comment>
<comment type="similarity">
    <text evidence="1">Belongs to the acetokinase family.</text>
</comment>
<dbReference type="EC" id="2.7.2.1" evidence="1"/>
<dbReference type="EMBL" id="CP001205">
    <property type="protein sequence ID" value="ACK74517.1"/>
    <property type="molecule type" value="Genomic_DNA"/>
</dbReference>
<dbReference type="RefSeq" id="WP_002665689.1">
    <property type="nucleotide sequence ID" value="NC_011728.1"/>
</dbReference>
<dbReference type="SMR" id="B7J2I0"/>
<dbReference type="KEGG" id="bbz:BbuZS7_0641"/>
<dbReference type="HOGENOM" id="CLU_020352_0_1_12"/>
<dbReference type="UniPathway" id="UPA00340">
    <property type="reaction ID" value="UER00458"/>
</dbReference>
<dbReference type="Proteomes" id="UP000006901">
    <property type="component" value="Chromosome"/>
</dbReference>
<dbReference type="GO" id="GO:0005737">
    <property type="term" value="C:cytoplasm"/>
    <property type="evidence" value="ECO:0007669"/>
    <property type="project" value="UniProtKB-SubCell"/>
</dbReference>
<dbReference type="GO" id="GO:0008776">
    <property type="term" value="F:acetate kinase activity"/>
    <property type="evidence" value="ECO:0007669"/>
    <property type="project" value="UniProtKB-UniRule"/>
</dbReference>
<dbReference type="GO" id="GO:0005524">
    <property type="term" value="F:ATP binding"/>
    <property type="evidence" value="ECO:0007669"/>
    <property type="project" value="UniProtKB-KW"/>
</dbReference>
<dbReference type="GO" id="GO:0000287">
    <property type="term" value="F:magnesium ion binding"/>
    <property type="evidence" value="ECO:0007669"/>
    <property type="project" value="UniProtKB-UniRule"/>
</dbReference>
<dbReference type="GO" id="GO:0006083">
    <property type="term" value="P:acetate metabolic process"/>
    <property type="evidence" value="ECO:0007669"/>
    <property type="project" value="TreeGrafter"/>
</dbReference>
<dbReference type="GO" id="GO:0006085">
    <property type="term" value="P:acetyl-CoA biosynthetic process"/>
    <property type="evidence" value="ECO:0007669"/>
    <property type="project" value="UniProtKB-UniRule"/>
</dbReference>
<dbReference type="CDD" id="cd24010">
    <property type="entry name" value="ASKHA_NBD_AcK_PK"/>
    <property type="match status" value="1"/>
</dbReference>
<dbReference type="Gene3D" id="3.30.420.40">
    <property type="match status" value="2"/>
</dbReference>
<dbReference type="HAMAP" id="MF_00020">
    <property type="entry name" value="Acetate_kinase"/>
    <property type="match status" value="1"/>
</dbReference>
<dbReference type="InterPro" id="IPR004372">
    <property type="entry name" value="Ac/propionate_kinase"/>
</dbReference>
<dbReference type="InterPro" id="IPR000890">
    <property type="entry name" value="Aliphatic_acid_kin_short-chain"/>
</dbReference>
<dbReference type="InterPro" id="IPR023865">
    <property type="entry name" value="Aliphatic_acid_kinase_CS"/>
</dbReference>
<dbReference type="InterPro" id="IPR043129">
    <property type="entry name" value="ATPase_NBD"/>
</dbReference>
<dbReference type="NCBIfam" id="TIGR00016">
    <property type="entry name" value="ackA"/>
    <property type="match status" value="1"/>
</dbReference>
<dbReference type="PANTHER" id="PTHR21060">
    <property type="entry name" value="ACETATE KINASE"/>
    <property type="match status" value="1"/>
</dbReference>
<dbReference type="PANTHER" id="PTHR21060:SF15">
    <property type="entry name" value="ACETATE KINASE-RELATED"/>
    <property type="match status" value="1"/>
</dbReference>
<dbReference type="Pfam" id="PF00871">
    <property type="entry name" value="Acetate_kinase"/>
    <property type="match status" value="1"/>
</dbReference>
<dbReference type="PIRSF" id="PIRSF000722">
    <property type="entry name" value="Acetate_prop_kin"/>
    <property type="match status" value="1"/>
</dbReference>
<dbReference type="PRINTS" id="PR00471">
    <property type="entry name" value="ACETATEKNASE"/>
</dbReference>
<dbReference type="SUPFAM" id="SSF53067">
    <property type="entry name" value="Actin-like ATPase domain"/>
    <property type="match status" value="2"/>
</dbReference>
<dbReference type="PROSITE" id="PS01075">
    <property type="entry name" value="ACETATE_KINASE_1"/>
    <property type="match status" value="1"/>
</dbReference>
<dbReference type="PROSITE" id="PS01076">
    <property type="entry name" value="ACETATE_KINASE_2"/>
    <property type="match status" value="1"/>
</dbReference>
<keyword id="KW-0067">ATP-binding</keyword>
<keyword id="KW-0963">Cytoplasm</keyword>
<keyword id="KW-0418">Kinase</keyword>
<keyword id="KW-0460">Magnesium</keyword>
<keyword id="KW-0479">Metal-binding</keyword>
<keyword id="KW-0547">Nucleotide-binding</keyword>
<keyword id="KW-0808">Transferase</keyword>